<comment type="function">
    <text evidence="1">Binds as a heterodimer with protein bS6 to the central domain of the 16S rRNA, where it helps stabilize the platform of the 30S subunit.</text>
</comment>
<comment type="subunit">
    <text evidence="1">Part of the 30S ribosomal subunit. Forms a tight heterodimer with protein bS6.</text>
</comment>
<comment type="similarity">
    <text evidence="1">Belongs to the bacterial ribosomal protein bS18 family.</text>
</comment>
<reference key="1">
    <citation type="journal article" date="2005" name="Proc. Natl. Acad. Sci. U.S.A.">
        <title>The complete genome sequence of Mycobacterium avium subspecies paratuberculosis.</title>
        <authorList>
            <person name="Li L."/>
            <person name="Bannantine J.P."/>
            <person name="Zhang Q."/>
            <person name="Amonsin A."/>
            <person name="May B.J."/>
            <person name="Alt D."/>
            <person name="Banerji N."/>
            <person name="Kanjilal S."/>
            <person name="Kapur V."/>
        </authorList>
    </citation>
    <scope>NUCLEOTIDE SEQUENCE [LARGE SCALE GENOMIC DNA]</scope>
    <source>
        <strain>ATCC BAA-968 / K-10</strain>
    </source>
</reference>
<accession>Q73TF1</accession>
<keyword id="KW-1185">Reference proteome</keyword>
<keyword id="KW-0687">Ribonucleoprotein</keyword>
<keyword id="KW-0689">Ribosomal protein</keyword>
<keyword id="KW-0694">RNA-binding</keyword>
<keyword id="KW-0699">rRNA-binding</keyword>
<proteinExistence type="inferred from homology"/>
<dbReference type="EMBL" id="AE016958">
    <property type="protein sequence ID" value="AAS06317.1"/>
    <property type="molecule type" value="Genomic_DNA"/>
</dbReference>
<dbReference type="SMR" id="Q73TF1"/>
<dbReference type="STRING" id="262316.MAP_3767c"/>
<dbReference type="KEGG" id="mpa:MAP_3767c"/>
<dbReference type="eggNOG" id="COG0238">
    <property type="taxonomic scope" value="Bacteria"/>
</dbReference>
<dbReference type="HOGENOM" id="CLU_148710_1_0_11"/>
<dbReference type="Proteomes" id="UP000000580">
    <property type="component" value="Chromosome"/>
</dbReference>
<dbReference type="GO" id="GO:0022627">
    <property type="term" value="C:cytosolic small ribosomal subunit"/>
    <property type="evidence" value="ECO:0007669"/>
    <property type="project" value="TreeGrafter"/>
</dbReference>
<dbReference type="GO" id="GO:0070181">
    <property type="term" value="F:small ribosomal subunit rRNA binding"/>
    <property type="evidence" value="ECO:0007669"/>
    <property type="project" value="TreeGrafter"/>
</dbReference>
<dbReference type="GO" id="GO:0003735">
    <property type="term" value="F:structural constituent of ribosome"/>
    <property type="evidence" value="ECO:0007669"/>
    <property type="project" value="InterPro"/>
</dbReference>
<dbReference type="GO" id="GO:0006412">
    <property type="term" value="P:translation"/>
    <property type="evidence" value="ECO:0007669"/>
    <property type="project" value="UniProtKB-UniRule"/>
</dbReference>
<dbReference type="FunFam" id="4.10.640.10:FF:000016">
    <property type="entry name" value="30S ribosomal protein S18"/>
    <property type="match status" value="1"/>
</dbReference>
<dbReference type="Gene3D" id="4.10.640.10">
    <property type="entry name" value="Ribosomal protein S18"/>
    <property type="match status" value="1"/>
</dbReference>
<dbReference type="HAMAP" id="MF_00270">
    <property type="entry name" value="Ribosomal_bS18"/>
    <property type="match status" value="1"/>
</dbReference>
<dbReference type="InterPro" id="IPR001648">
    <property type="entry name" value="Ribosomal_bS18"/>
</dbReference>
<dbReference type="InterPro" id="IPR036870">
    <property type="entry name" value="Ribosomal_bS18_sf"/>
</dbReference>
<dbReference type="NCBIfam" id="TIGR00165">
    <property type="entry name" value="S18"/>
    <property type="match status" value="1"/>
</dbReference>
<dbReference type="PANTHER" id="PTHR13479">
    <property type="entry name" value="30S RIBOSOMAL PROTEIN S18"/>
    <property type="match status" value="1"/>
</dbReference>
<dbReference type="PANTHER" id="PTHR13479:SF40">
    <property type="entry name" value="SMALL RIBOSOMAL SUBUNIT PROTEIN BS18M"/>
    <property type="match status" value="1"/>
</dbReference>
<dbReference type="Pfam" id="PF01084">
    <property type="entry name" value="Ribosomal_S18"/>
    <property type="match status" value="1"/>
</dbReference>
<dbReference type="PRINTS" id="PR00974">
    <property type="entry name" value="RIBOSOMALS18"/>
</dbReference>
<dbReference type="SUPFAM" id="SSF46911">
    <property type="entry name" value="Ribosomal protein S18"/>
    <property type="match status" value="1"/>
</dbReference>
<evidence type="ECO:0000255" key="1">
    <source>
        <dbReference type="HAMAP-Rule" id="MF_00270"/>
    </source>
</evidence>
<evidence type="ECO:0000305" key="2"/>
<feature type="chain" id="PRO_0000111186" description="Small ribosomal subunit protein bS18B">
    <location>
        <begin position="1"/>
        <end position="88"/>
    </location>
</feature>
<sequence>MPKKPARTRRPAPLAGRARKKNLLDSLGLRTVDYKDTATLRVFISERGKIRSRQVTGLSVQQQRQVATAIKNAREMALLPYPGQGIKP</sequence>
<protein>
    <recommendedName>
        <fullName evidence="1">Small ribosomal subunit protein bS18B</fullName>
    </recommendedName>
    <alternativeName>
        <fullName evidence="2">30S ribosomal protein S18 2</fullName>
    </alternativeName>
</protein>
<gene>
    <name evidence="1" type="primary">rpsR2</name>
    <name type="ordered locus">MAP_3767c</name>
</gene>
<name>RS182_MYCPA</name>
<organism>
    <name type="scientific">Mycolicibacterium paratuberculosis (strain ATCC BAA-968 / K-10)</name>
    <name type="common">Mycobacterium paratuberculosis</name>
    <dbReference type="NCBI Taxonomy" id="262316"/>
    <lineage>
        <taxon>Bacteria</taxon>
        <taxon>Bacillati</taxon>
        <taxon>Actinomycetota</taxon>
        <taxon>Actinomycetes</taxon>
        <taxon>Mycobacteriales</taxon>
        <taxon>Mycobacteriaceae</taxon>
        <taxon>Mycobacterium</taxon>
        <taxon>Mycobacterium avium complex (MAC)</taxon>
    </lineage>
</organism>